<organism>
    <name type="scientific">Bacillus phage SBSphiJ7</name>
    <dbReference type="NCBI Taxonomy" id="2930344"/>
    <lineage>
        <taxon>Viruses</taxon>
        <taxon>Duplodnaviria</taxon>
        <taxon>Heunggongvirae</taxon>
        <taxon>Uroviricota</taxon>
        <taxon>Caudoviricetes</taxon>
        <taxon>Herelleviridae</taxon>
        <taxon>Bastillevirinae</taxon>
        <taxon>Nitunavirus</taxon>
    </lineage>
</organism>
<proteinExistence type="inferred from homology"/>
<comment type="function">
    <text evidence="2 5">Blocks activity of the Thoeris antiviral defense system (ThsA and ThsB, AC J8G6Z1, J8G8J6) when expressed in B.subtilis normally susceptible to SBSphiJ group phages. When added to phage SBSphiJ (which does not naturally encode this gene) confers resistance to Thoeris. Inhibits Thoeris upstream of ThsA (PubMed:36174646). Probably acts by binding and sequestering cyclic ADP-D-ribose signal molecules produced upon viral infection (3'cADPR or 2'cADPR); sequestration prevents the signal from activating the ThsA of the Thoeris antiviral defense system (Probable).</text>
</comment>
<comment type="subunit">
    <text evidence="1">Homodimer.</text>
</comment>
<comment type="domain">
    <text evidence="1">Upon ligand binding the C-terminus changes conformation, enclosing the ligand.</text>
</comment>
<comment type="disruption phenotype">
    <text evidence="2">Knockdown decreases phage infectivity about 100-fold.</text>
</comment>
<comment type="miscellaneous">
    <text evidence="4">Although 2'cADPR has been crystallized with Tad1 (AC P0DW58) we have chosen to show 3'cADPR binding here, as evidence suggests 3'cADPR is produced by ThsB2 (AC J8CSK2) and 3'cADPR activates ThsA better than 2'cADPR (AC J8G6Z1).</text>
</comment>
<comment type="similarity">
    <text evidence="4">Belongs to the Tad1 family.</text>
</comment>
<dbReference type="EMBL" id="OM982674">
    <property type="protein sequence ID" value="UPI13470.1"/>
    <property type="molecule type" value="Genomic_DNA"/>
</dbReference>
<dbReference type="SMR" id="P0DW57"/>
<dbReference type="Proteomes" id="UP000831813">
    <property type="component" value="Segment"/>
</dbReference>
<dbReference type="GO" id="GO:0000166">
    <property type="term" value="F:nucleotide binding"/>
    <property type="evidence" value="ECO:0007669"/>
    <property type="project" value="UniProtKB-KW"/>
</dbReference>
<dbReference type="GO" id="GO:0052170">
    <property type="term" value="P:symbiont-mediated suppression of host innate immune response"/>
    <property type="evidence" value="ECO:0007669"/>
    <property type="project" value="UniProtKB-KW"/>
</dbReference>
<dbReference type="InterPro" id="IPR056098">
    <property type="entry name" value="Acb2/Tad1_hairpin"/>
</dbReference>
<dbReference type="Pfam" id="PF24729">
    <property type="entry name" value="Acb2_Tad1_hairpin"/>
    <property type="match status" value="1"/>
</dbReference>
<evidence type="ECO:0000250" key="1">
    <source>
        <dbReference type="UniProtKB" id="P0DW58"/>
    </source>
</evidence>
<evidence type="ECO:0000269" key="2">
    <source>
    </source>
</evidence>
<evidence type="ECO:0000303" key="3">
    <source>
    </source>
</evidence>
<evidence type="ECO:0000305" key="4"/>
<evidence type="ECO:0000305" key="5">
    <source>
    </source>
</evidence>
<evidence type="ECO:0000312" key="6">
    <source>
        <dbReference type="EMBL" id="UPI13470.1"/>
    </source>
</evidence>
<gene>
    <name evidence="3" type="primary">tad1</name>
</gene>
<accession>P0DW57</accession>
<protein>
    <recommendedName>
        <fullName evidence="3">Thoeris anti-defense 1</fullName>
        <shortName evidence="3">Tad1</shortName>
    </recommendedName>
</protein>
<sequence>MRELKHELLPTRHTQVFHEDKDKMEFNAPHHFVVVPAGSPLVDQQIHYGRGGNSKKVTVKDFAGKLATVNFQLGPVTEHGANGVMNEDLIAMVITRLQYFQNSEFNCRENAMAITKLEEALMWLNKRTAEREQRGVEGTHEK</sequence>
<keyword id="KW-0945">Host-virus interaction</keyword>
<keyword id="KW-1090">Inhibition of host innate immune response by virus</keyword>
<keyword id="KW-0547">Nucleotide-binding</keyword>
<keyword id="KW-1185">Reference proteome</keyword>
<keyword id="KW-0899">Viral immunoevasion</keyword>
<name>TAD1_BPPSB</name>
<reference evidence="6" key="1">
    <citation type="journal article" date="2022" name="Nature">
        <title>Viruses inhibit TIR gcADPR signalling to overcome bacterial defence.</title>
        <authorList>
            <person name="Leavitt A."/>
            <person name="Yirmiya E."/>
            <person name="Amitai G."/>
            <person name="Lu A."/>
            <person name="Garb J."/>
            <person name="Herbst E."/>
            <person name="Morehouse B.R."/>
            <person name="Hobbs S.J."/>
            <person name="Antine S.P."/>
            <person name="Sun Z.J."/>
            <person name="Kranzusch P.J."/>
            <person name="Sorek R."/>
        </authorList>
    </citation>
    <scope>NUCLEOTIDE SEQUENCE [GENOMIC DNA]</scope>
    <scope>FUNCTION</scope>
    <scope>DISRUPTION PHENOTYPE</scope>
</reference>
<feature type="chain" id="PRO_0000457984" description="Thoeris anti-defense 1">
    <location>
        <begin position="1"/>
        <end position="142"/>
    </location>
</feature>
<feature type="binding site" evidence="1">
    <location>
        <position position="72"/>
    </location>
    <ligand>
        <name>3'cADPR</name>
        <dbReference type="ChEBI" id="CHEBI:194249"/>
    </ligand>
</feature>
<feature type="binding site" evidence="1">
    <location>
        <position position="74"/>
    </location>
    <ligand>
        <name>3'cADPR</name>
        <dbReference type="ChEBI" id="CHEBI:194249"/>
    </ligand>
</feature>
<feature type="binding site" evidence="1">
    <location>
        <position position="96"/>
    </location>
    <ligand>
        <name>3'cADPR</name>
        <dbReference type="ChEBI" id="CHEBI:194249"/>
    </ligand>
</feature>
<feature type="binding site" evidence="1">
    <location>
        <position position="100"/>
    </location>
    <ligand>
        <name>3'cADPR</name>
        <dbReference type="ChEBI" id="CHEBI:194249"/>
    </ligand>
</feature>
<feature type="binding site" evidence="1">
    <location>
        <position position="105"/>
    </location>
    <ligand>
        <name>3'cADPR</name>
        <dbReference type="ChEBI" id="CHEBI:194249"/>
    </ligand>
</feature>
<feature type="binding site" evidence="1">
    <location>
        <position position="110"/>
    </location>
    <ligand>
        <name>3'cADPR</name>
        <dbReference type="ChEBI" id="CHEBI:194249"/>
    </ligand>
</feature>
<feature type="binding site" evidence="1">
    <location>
        <position position="127"/>
    </location>
    <ligand>
        <name>3'cADPR</name>
        <dbReference type="ChEBI" id="CHEBI:194249"/>
    </ligand>
</feature>
<feature type="binding site" evidence="1">
    <location>
        <position position="131"/>
    </location>
    <ligand>
        <name>3'cADPR</name>
        <dbReference type="ChEBI" id="CHEBI:194249"/>
    </ligand>
</feature>
<feature type="binding site" evidence="1">
    <location>
        <position position="138"/>
    </location>
    <ligand>
        <name>3'cADPR</name>
        <dbReference type="ChEBI" id="CHEBI:194249"/>
    </ligand>
</feature>